<gene>
    <name evidence="1" type="primary">rpmI</name>
    <name type="ordered locus">Bpro_2104</name>
</gene>
<feature type="chain" id="PRO_0000258722" description="Large ribosomal subunit protein bL35">
    <location>
        <begin position="1"/>
        <end position="67"/>
    </location>
</feature>
<feature type="region of interest" description="Disordered" evidence="2">
    <location>
        <begin position="1"/>
        <end position="25"/>
    </location>
</feature>
<feature type="compositionally biased region" description="Basic residues" evidence="2">
    <location>
        <begin position="1"/>
        <end position="16"/>
    </location>
</feature>
<accession>Q12BR1</accession>
<comment type="similarity">
    <text evidence="1">Belongs to the bacterial ribosomal protein bL35 family.</text>
</comment>
<evidence type="ECO:0000255" key="1">
    <source>
        <dbReference type="HAMAP-Rule" id="MF_00514"/>
    </source>
</evidence>
<evidence type="ECO:0000256" key="2">
    <source>
        <dbReference type="SAM" id="MobiDB-lite"/>
    </source>
</evidence>
<evidence type="ECO:0000305" key="3"/>
<dbReference type="EMBL" id="CP000316">
    <property type="protein sequence ID" value="ABE44031.1"/>
    <property type="molecule type" value="Genomic_DNA"/>
</dbReference>
<dbReference type="RefSeq" id="WP_007870723.1">
    <property type="nucleotide sequence ID" value="NZ_FNHX01000002.1"/>
</dbReference>
<dbReference type="SMR" id="Q12BR1"/>
<dbReference type="STRING" id="296591.Bpro_2104"/>
<dbReference type="KEGG" id="pol:Bpro_2104"/>
<dbReference type="eggNOG" id="COG0291">
    <property type="taxonomic scope" value="Bacteria"/>
</dbReference>
<dbReference type="HOGENOM" id="CLU_169643_1_0_4"/>
<dbReference type="OrthoDB" id="47476at2"/>
<dbReference type="Proteomes" id="UP000001983">
    <property type="component" value="Chromosome"/>
</dbReference>
<dbReference type="GO" id="GO:0022625">
    <property type="term" value="C:cytosolic large ribosomal subunit"/>
    <property type="evidence" value="ECO:0007669"/>
    <property type="project" value="TreeGrafter"/>
</dbReference>
<dbReference type="GO" id="GO:0003735">
    <property type="term" value="F:structural constituent of ribosome"/>
    <property type="evidence" value="ECO:0007669"/>
    <property type="project" value="InterPro"/>
</dbReference>
<dbReference type="GO" id="GO:0006412">
    <property type="term" value="P:translation"/>
    <property type="evidence" value="ECO:0007669"/>
    <property type="project" value="UniProtKB-UniRule"/>
</dbReference>
<dbReference type="FunFam" id="4.10.410.60:FF:000001">
    <property type="entry name" value="50S ribosomal protein L35"/>
    <property type="match status" value="1"/>
</dbReference>
<dbReference type="Gene3D" id="4.10.410.60">
    <property type="match status" value="1"/>
</dbReference>
<dbReference type="HAMAP" id="MF_00514">
    <property type="entry name" value="Ribosomal_bL35"/>
    <property type="match status" value="1"/>
</dbReference>
<dbReference type="InterPro" id="IPR001706">
    <property type="entry name" value="Ribosomal_bL35"/>
</dbReference>
<dbReference type="InterPro" id="IPR021137">
    <property type="entry name" value="Ribosomal_bL35-like"/>
</dbReference>
<dbReference type="InterPro" id="IPR018265">
    <property type="entry name" value="Ribosomal_bL35_CS"/>
</dbReference>
<dbReference type="InterPro" id="IPR037229">
    <property type="entry name" value="Ribosomal_bL35_sf"/>
</dbReference>
<dbReference type="NCBIfam" id="TIGR00001">
    <property type="entry name" value="rpmI_bact"/>
    <property type="match status" value="1"/>
</dbReference>
<dbReference type="PANTHER" id="PTHR33343">
    <property type="entry name" value="54S RIBOSOMAL PROTEIN BL35M"/>
    <property type="match status" value="1"/>
</dbReference>
<dbReference type="PANTHER" id="PTHR33343:SF1">
    <property type="entry name" value="LARGE RIBOSOMAL SUBUNIT PROTEIN BL35M"/>
    <property type="match status" value="1"/>
</dbReference>
<dbReference type="Pfam" id="PF01632">
    <property type="entry name" value="Ribosomal_L35p"/>
    <property type="match status" value="1"/>
</dbReference>
<dbReference type="PRINTS" id="PR00064">
    <property type="entry name" value="RIBOSOMALL35"/>
</dbReference>
<dbReference type="SUPFAM" id="SSF143034">
    <property type="entry name" value="L35p-like"/>
    <property type="match status" value="1"/>
</dbReference>
<dbReference type="PROSITE" id="PS00936">
    <property type="entry name" value="RIBOSOMAL_L35"/>
    <property type="match status" value="1"/>
</dbReference>
<name>RL35_POLSJ</name>
<protein>
    <recommendedName>
        <fullName evidence="1">Large ribosomal subunit protein bL35</fullName>
    </recommendedName>
    <alternativeName>
        <fullName evidence="3">50S ribosomal protein L35</fullName>
    </alternativeName>
</protein>
<keyword id="KW-1185">Reference proteome</keyword>
<keyword id="KW-0687">Ribonucleoprotein</keyword>
<keyword id="KW-0689">Ribosomal protein</keyword>
<proteinExistence type="inferred from homology"/>
<sequence>MPKMKTKSGAKKRFRVRPGGTVKRGQAFKRHILTKKTTKNKRHLRGAVTVHETNMGHMAQMLPGQGI</sequence>
<organism>
    <name type="scientific">Polaromonas sp. (strain JS666 / ATCC BAA-500)</name>
    <dbReference type="NCBI Taxonomy" id="296591"/>
    <lineage>
        <taxon>Bacteria</taxon>
        <taxon>Pseudomonadati</taxon>
        <taxon>Pseudomonadota</taxon>
        <taxon>Betaproteobacteria</taxon>
        <taxon>Burkholderiales</taxon>
        <taxon>Comamonadaceae</taxon>
        <taxon>Polaromonas</taxon>
    </lineage>
</organism>
<reference key="1">
    <citation type="journal article" date="2008" name="Appl. Environ. Microbiol.">
        <title>The genome of Polaromonas sp. strain JS666: insights into the evolution of a hydrocarbon- and xenobiotic-degrading bacterium, and features of relevance to biotechnology.</title>
        <authorList>
            <person name="Mattes T.E."/>
            <person name="Alexander A.K."/>
            <person name="Richardson P.M."/>
            <person name="Munk A.C."/>
            <person name="Han C.S."/>
            <person name="Stothard P."/>
            <person name="Coleman N.V."/>
        </authorList>
    </citation>
    <scope>NUCLEOTIDE SEQUENCE [LARGE SCALE GENOMIC DNA]</scope>
    <source>
        <strain>JS666 / ATCC BAA-500</strain>
    </source>
</reference>